<keyword id="KW-1003">Cell membrane</keyword>
<keyword id="KW-0217">Developmental protein</keyword>
<keyword id="KW-0297">G-protein coupled receptor</keyword>
<keyword id="KW-0472">Membrane</keyword>
<keyword id="KW-0675">Receptor</keyword>
<keyword id="KW-1185">Reference proteome</keyword>
<keyword id="KW-0807">Transducer</keyword>
<keyword id="KW-0812">Transmembrane</keyword>
<keyword id="KW-1133">Transmembrane helix</keyword>
<reference key="1">
    <citation type="journal article" date="2000" name="Nature">
        <title>Sequence and analysis of chromosome 3 of the plant Arabidopsis thaliana.</title>
        <authorList>
            <person name="Salanoubat M."/>
            <person name="Lemcke K."/>
            <person name="Rieger M."/>
            <person name="Ansorge W."/>
            <person name="Unseld M."/>
            <person name="Fartmann B."/>
            <person name="Valle G."/>
            <person name="Bloecker H."/>
            <person name="Perez-Alonso M."/>
            <person name="Obermaier B."/>
            <person name="Delseny M."/>
            <person name="Boutry M."/>
            <person name="Grivell L.A."/>
            <person name="Mache R."/>
            <person name="Puigdomenech P."/>
            <person name="De Simone V."/>
            <person name="Choisne N."/>
            <person name="Artiguenave F."/>
            <person name="Robert C."/>
            <person name="Brottier P."/>
            <person name="Wincker P."/>
            <person name="Cattolico L."/>
            <person name="Weissenbach J."/>
            <person name="Saurin W."/>
            <person name="Quetier F."/>
            <person name="Schaefer M."/>
            <person name="Mueller-Auer S."/>
            <person name="Gabel C."/>
            <person name="Fuchs M."/>
            <person name="Benes V."/>
            <person name="Wurmbach E."/>
            <person name="Drzonek H."/>
            <person name="Erfle H."/>
            <person name="Jordan N."/>
            <person name="Bangert S."/>
            <person name="Wiedelmann R."/>
            <person name="Kranz H."/>
            <person name="Voss H."/>
            <person name="Holland R."/>
            <person name="Brandt P."/>
            <person name="Nyakatura G."/>
            <person name="Vezzi A."/>
            <person name="D'Angelo M."/>
            <person name="Pallavicini A."/>
            <person name="Toppo S."/>
            <person name="Simionati B."/>
            <person name="Conrad A."/>
            <person name="Hornischer K."/>
            <person name="Kauer G."/>
            <person name="Loehnert T.-H."/>
            <person name="Nordsiek G."/>
            <person name="Reichelt J."/>
            <person name="Scharfe M."/>
            <person name="Schoen O."/>
            <person name="Bargues M."/>
            <person name="Terol J."/>
            <person name="Climent J."/>
            <person name="Navarro P."/>
            <person name="Collado C."/>
            <person name="Perez-Perez A."/>
            <person name="Ottenwaelder B."/>
            <person name="Duchemin D."/>
            <person name="Cooke R."/>
            <person name="Laudie M."/>
            <person name="Berger-Llauro C."/>
            <person name="Purnelle B."/>
            <person name="Masuy D."/>
            <person name="de Haan M."/>
            <person name="Maarse A.C."/>
            <person name="Alcaraz J.-P."/>
            <person name="Cottet A."/>
            <person name="Casacuberta E."/>
            <person name="Monfort A."/>
            <person name="Argiriou A."/>
            <person name="Flores M."/>
            <person name="Liguori R."/>
            <person name="Vitale D."/>
            <person name="Mannhaupt G."/>
            <person name="Haase D."/>
            <person name="Schoof H."/>
            <person name="Rudd S."/>
            <person name="Zaccaria P."/>
            <person name="Mewes H.-W."/>
            <person name="Mayer K.F.X."/>
            <person name="Kaul S."/>
            <person name="Town C.D."/>
            <person name="Koo H.L."/>
            <person name="Tallon L.J."/>
            <person name="Jenkins J."/>
            <person name="Rooney T."/>
            <person name="Rizzo M."/>
            <person name="Walts A."/>
            <person name="Utterback T."/>
            <person name="Fujii C.Y."/>
            <person name="Shea T.P."/>
            <person name="Creasy T.H."/>
            <person name="Haas B."/>
            <person name="Maiti R."/>
            <person name="Wu D."/>
            <person name="Peterson J."/>
            <person name="Van Aken S."/>
            <person name="Pai G."/>
            <person name="Militscher J."/>
            <person name="Sellers P."/>
            <person name="Gill J.E."/>
            <person name="Feldblyum T.V."/>
            <person name="Preuss D."/>
            <person name="Lin X."/>
            <person name="Nierman W.C."/>
            <person name="Salzberg S.L."/>
            <person name="White O."/>
            <person name="Venter J.C."/>
            <person name="Fraser C.M."/>
            <person name="Kaneko T."/>
            <person name="Nakamura Y."/>
            <person name="Sato S."/>
            <person name="Kato T."/>
            <person name="Asamizu E."/>
            <person name="Sasamoto S."/>
            <person name="Kimura T."/>
            <person name="Idesawa K."/>
            <person name="Kawashima K."/>
            <person name="Kishida Y."/>
            <person name="Kiyokawa C."/>
            <person name="Kohara M."/>
            <person name="Matsumoto M."/>
            <person name="Matsuno A."/>
            <person name="Muraki A."/>
            <person name="Nakayama S."/>
            <person name="Nakazaki N."/>
            <person name="Shinpo S."/>
            <person name="Takeuchi C."/>
            <person name="Wada T."/>
            <person name="Watanabe A."/>
            <person name="Yamada M."/>
            <person name="Yasuda M."/>
            <person name="Tabata S."/>
        </authorList>
    </citation>
    <scope>NUCLEOTIDE SEQUENCE [LARGE SCALE GENOMIC DNA]</scope>
    <source>
        <strain>cv. Columbia</strain>
    </source>
</reference>
<reference key="2">
    <citation type="journal article" date="2017" name="Plant J.">
        <title>Araport11: a complete reannotation of the Arabidopsis thaliana reference genome.</title>
        <authorList>
            <person name="Cheng C.Y."/>
            <person name="Krishnakumar V."/>
            <person name="Chan A.P."/>
            <person name="Thibaud-Nissen F."/>
            <person name="Schobel S."/>
            <person name="Town C.D."/>
        </authorList>
    </citation>
    <scope>GENOME REANNOTATION</scope>
    <source>
        <strain>cv. Columbia</strain>
    </source>
</reference>
<reference key="3">
    <citation type="journal article" date="2003" name="Science">
        <title>Empirical analysis of transcriptional activity in the Arabidopsis genome.</title>
        <authorList>
            <person name="Yamada K."/>
            <person name="Lim J."/>
            <person name="Dale J.M."/>
            <person name="Chen H."/>
            <person name="Shinn P."/>
            <person name="Palm C.J."/>
            <person name="Southwick A.M."/>
            <person name="Wu H.C."/>
            <person name="Kim C.J."/>
            <person name="Nguyen M."/>
            <person name="Pham P.K."/>
            <person name="Cheuk R.F."/>
            <person name="Karlin-Newmann G."/>
            <person name="Liu S.X."/>
            <person name="Lam B."/>
            <person name="Sakano H."/>
            <person name="Wu T."/>
            <person name="Yu G."/>
            <person name="Miranda M."/>
            <person name="Quach H.L."/>
            <person name="Tripp M."/>
            <person name="Chang C.H."/>
            <person name="Lee J.M."/>
            <person name="Toriumi M.J."/>
            <person name="Chan M.M."/>
            <person name="Tang C.C."/>
            <person name="Onodera C.S."/>
            <person name="Deng J.M."/>
            <person name="Akiyama K."/>
            <person name="Ansari Y."/>
            <person name="Arakawa T."/>
            <person name="Banh J."/>
            <person name="Banno F."/>
            <person name="Bowser L."/>
            <person name="Brooks S.Y."/>
            <person name="Carninci P."/>
            <person name="Chao Q."/>
            <person name="Choy N."/>
            <person name="Enju A."/>
            <person name="Goldsmith A.D."/>
            <person name="Gurjal M."/>
            <person name="Hansen N.F."/>
            <person name="Hayashizaki Y."/>
            <person name="Johnson-Hopson C."/>
            <person name="Hsuan V.W."/>
            <person name="Iida K."/>
            <person name="Karnes M."/>
            <person name="Khan S."/>
            <person name="Koesema E."/>
            <person name="Ishida J."/>
            <person name="Jiang P.X."/>
            <person name="Jones T."/>
            <person name="Kawai J."/>
            <person name="Kamiya A."/>
            <person name="Meyers C."/>
            <person name="Nakajima M."/>
            <person name="Narusaka M."/>
            <person name="Seki M."/>
            <person name="Sakurai T."/>
            <person name="Satou M."/>
            <person name="Tamse R."/>
            <person name="Vaysberg M."/>
            <person name="Wallender E.K."/>
            <person name="Wong C."/>
            <person name="Yamamura Y."/>
            <person name="Yuan S."/>
            <person name="Shinozaki K."/>
            <person name="Davis R.W."/>
            <person name="Theologis A."/>
            <person name="Ecker J.R."/>
        </authorList>
    </citation>
    <scope>NUCLEOTIDE SEQUENCE [LARGE SCALE MRNA]</scope>
    <source>
        <strain>cv. Columbia</strain>
    </source>
</reference>
<reference key="4">
    <citation type="journal article" date="2006" name="Genome Biol.">
        <title>Mining the Arabidopsis thaliana genome for highly-divergent seven transmembrane receptors.</title>
        <authorList>
            <person name="Moriyama E.N."/>
            <person name="Strope P.K."/>
            <person name="Opiyo S.O."/>
            <person name="Chen Z."/>
            <person name="Jones A.M."/>
        </authorList>
    </citation>
    <scope>GENE FAMILY</scope>
</reference>
<reference key="5">
    <citation type="journal article" date="2008" name="Genome Biol.">
        <title>Whole proteome identification of plant candidate G-protein coupled receptors in Arabidopsis, rice, and poplar: computational prediction and in-vivo protein coupling.</title>
        <authorList>
            <person name="Gookin T.E."/>
            <person name="Kim J."/>
            <person name="Assmann S.M."/>
        </authorList>
    </citation>
    <scope>FUNCTION</scope>
    <scope>GENE FAMILY</scope>
    <scope>NOMENCLATURE</scope>
</reference>
<reference key="6">
    <citation type="journal article" date="2012" name="Biochem. Biophys. Res. Commun.">
        <title>Two G-protein-coupled-receptor candidates, Cand2 and Cand7, are involved in Arabidopsis root growth mediated by the bacterial quorum-sensing signals N-acyl-homoserine lactones.</title>
        <authorList>
            <person name="Jin G."/>
            <person name="Liu F."/>
            <person name="Ma H."/>
            <person name="Hao S."/>
            <person name="Zhao Q."/>
            <person name="Bian Z."/>
            <person name="Jia Z."/>
            <person name="Song S."/>
        </authorList>
    </citation>
    <scope>FUNCTION</scope>
    <scope>DISRUPTION PHENOTYPE</scope>
    <scope>INDUCTION BY N-ACYL-HOMOSERINE LACTONES</scope>
    <source>
        <strain>cv. Columbia</strain>
    </source>
</reference>
<reference key="7">
    <citation type="journal article" date="2018" name="J. Pineal Res.">
        <title>Phytomelatonin receptor PMTR1-mediated signaling regulates stomatal closure in Arabidopsis thaliana.</title>
        <authorList>
            <person name="Wei J."/>
            <person name="Li D.-X."/>
            <person name="Zhang J.-R."/>
            <person name="Shan C."/>
            <person name="Rengel Z."/>
            <person name="Song Z.-B."/>
            <person name="Chen Q."/>
        </authorList>
    </citation>
    <scope>FUNCTION</scope>
    <scope>DISRUPTION PHENOTYPE</scope>
    <scope>INTERACTION WITH GPA1</scope>
    <scope>INDUCTION BY MELATONIN</scope>
    <scope>SUBCELLULAR LOCATION</scope>
    <source>
        <strain>cv. Columbia</strain>
        <strain>cv. Wassilewskija</strain>
    </source>
</reference>
<reference key="8">
    <citation type="journal article" date="2021" name="Int. J. Mol. Sci.">
        <title>CAND2/PMTR1 is required for melatonin-conferred osmotic stress tolerance in Arabidopsis.</title>
        <authorList>
            <person name="Wang L.-F."/>
            <person name="Li T.-T."/>
            <person name="Zhang Y."/>
            <person name="Guo J.-X."/>
            <person name="Lu K.-K."/>
            <person name="Liu W.-C."/>
        </authorList>
    </citation>
    <scope>FUNCTION</scope>
    <scope>DISRUPTION PHENOTYPE</scope>
    <scope>INDUCTION BY OSMOTIC STRESS</scope>
    <source>
        <strain>cv. Columbia</strain>
    </source>
</reference>
<organism>
    <name type="scientific">Arabidopsis thaliana</name>
    <name type="common">Mouse-ear cress</name>
    <dbReference type="NCBI Taxonomy" id="3702"/>
    <lineage>
        <taxon>Eukaryota</taxon>
        <taxon>Viridiplantae</taxon>
        <taxon>Streptophyta</taxon>
        <taxon>Embryophyta</taxon>
        <taxon>Tracheophyta</taxon>
        <taxon>Spermatophyta</taxon>
        <taxon>Magnoliopsida</taxon>
        <taxon>eudicotyledons</taxon>
        <taxon>Gunneridae</taxon>
        <taxon>Pentapetalae</taxon>
        <taxon>rosids</taxon>
        <taxon>malvids</taxon>
        <taxon>Brassicales</taxon>
        <taxon>Brassicaceae</taxon>
        <taxon>Camelineae</taxon>
        <taxon>Arabidopsis</taxon>
    </lineage>
</organism>
<proteinExistence type="evidence at protein level"/>
<comment type="function">
    <text evidence="2 3 4 5">Plays a role in plants and microbes interactions (PubMed:22206669). G-protein coupled melatonin receptor involved in root growth mediated by the bacterial quorum-sensing signals N-acyl-homoserine lactones (AHLs) (PubMed:18671868, PubMed:22206669). Binds to melatonin (PubMed:29702752). Phytomelatonin receptor required, in collaboration with GPA1, for melatonin-mediated stomatal closure involving H(2)O(2) and Ca(2+) signals (PubMed:29702752). Essential for melatonin-mediated plant response to osmotic stress probably by activating reactive oxygen species (ROS) scavenging ability (PubMed:33924609).</text>
</comment>
<comment type="subunit">
    <text evidence="4">Interacts with GPA1.</text>
</comment>
<comment type="subcellular location">
    <subcellularLocation>
        <location evidence="4">Cell membrane</location>
        <topology evidence="1">Multi-pass membrane protein</topology>
    </subcellularLocation>
</comment>
<comment type="tissue specificity">
    <text evidence="4">Expressed at low levels in seedlings.</text>
</comment>
<comment type="induction">
    <text evidence="3 4 5">Induced by the N-acyl-homoserine lactones (AHLs) N-3-oxo-hexanoyl-homoserine lactone (3OC6-HSL) and N-3-oxo-octanoyl-homoserine lactone (3OC8-HSL) (PubMed:22206669). Triggered by melatonin in leaves, cotyledons, hypocotyls, roots and guard cells (PubMed:29702752). Induced by osmotic stress (PubMed:33924609).</text>
</comment>
<comment type="disruption phenotype">
    <text evidence="3 4 5">Small leaf size phenotype (PubMed:29702752). Abolished Gram-negative bacteria-mediated promotion of root elongation triggered by the N-acyl-homoserine lactones (AHLs) N-3-oxo-hexanoyl-homoserine lactone (3OC6-HSL) and N-3-oxo-octanoyl-homoserine lactone (3OC8-HSL) (PubMed:22206669). Insensitivity to melatonin-induced stomatal closure associated with abolished melatonin-induced H(2)O(2) production and Ca(2+) influx (PubMed:29702752). Reduced osmotic stress tolerance associated with increased reactive oxygen species (ROS) accumulation (PubMed:33924609).</text>
</comment>
<comment type="similarity">
    <text evidence="8">Belongs to the UPF0359 family.</text>
</comment>
<comment type="sequence caution" evidence="8">
    <conflict type="erroneous gene model prediction">
        <sequence resource="EMBL-CDS" id="AAG51409"/>
    </conflict>
</comment>
<sequence>MRVLSEIAESPFVISRLSPDSTATGGFIGGWVGKCHGFLHNTVLVLASILFVAYLAYEAKKSLSKLSNRRSYIMIAYYGFLWLVSLLNLAWCCLQAWECTPGKEVIWNLLTLFTTSGMLFLEVSLVAFLFQGNYASGAEALTRTFLISGLVIGLDLLLKAIYLFGFGVPLFIDNNEHIHKFKWGLWVIHKLLLAGIYGMIFFMYNSKWRERLPARPAFYKYITVMLALNGLSLFACALTANGAHFGLWLYGITSVCYHAFYLPLLYVTFLADFFQEEDLNLENVYYSEMKDAGFFDADWE</sequence>
<accession>Q94AH1</accession>
<accession>Q9CAW5</accession>
<dbReference type="EMBL" id="AC009465">
    <property type="protein sequence ID" value="AAG51409.1"/>
    <property type="status" value="ALT_SEQ"/>
    <property type="molecule type" value="Genomic_DNA"/>
</dbReference>
<dbReference type="EMBL" id="CP002686">
    <property type="protein sequence ID" value="AEE74175.1"/>
    <property type="molecule type" value="Genomic_DNA"/>
</dbReference>
<dbReference type="EMBL" id="AY046040">
    <property type="protein sequence ID" value="AAK76714.1"/>
    <property type="molecule type" value="mRNA"/>
</dbReference>
<dbReference type="RefSeq" id="NP_566244.1">
    <property type="nucleotide sequence ID" value="NM_111373.3"/>
</dbReference>
<dbReference type="FunCoup" id="Q94AH1">
    <property type="interactions" value="1684"/>
</dbReference>
<dbReference type="IntAct" id="Q94AH1">
    <property type="interactions" value="1"/>
</dbReference>
<dbReference type="STRING" id="3702.Q94AH1"/>
<dbReference type="PaxDb" id="3702-AT3G05010.1"/>
<dbReference type="EnsemblPlants" id="AT3G05010.1">
    <property type="protein sequence ID" value="AT3G05010.1"/>
    <property type="gene ID" value="AT3G05010"/>
</dbReference>
<dbReference type="GeneID" id="819662"/>
<dbReference type="Gramene" id="AT3G05010.1">
    <property type="protein sequence ID" value="AT3G05010.1"/>
    <property type="gene ID" value="AT3G05010"/>
</dbReference>
<dbReference type="KEGG" id="ath:AT3G05010"/>
<dbReference type="Araport" id="AT3G05010"/>
<dbReference type="TAIR" id="AT3G05010">
    <property type="gene designation" value="CAND2"/>
</dbReference>
<dbReference type="eggNOG" id="KOG4536">
    <property type="taxonomic scope" value="Eukaryota"/>
</dbReference>
<dbReference type="HOGENOM" id="CLU_078931_0_0_1"/>
<dbReference type="InParanoid" id="Q94AH1"/>
<dbReference type="OMA" id="DRWKSIN"/>
<dbReference type="OrthoDB" id="10027388at2759"/>
<dbReference type="PhylomeDB" id="Q94AH1"/>
<dbReference type="PRO" id="PR:Q94AH1"/>
<dbReference type="Proteomes" id="UP000006548">
    <property type="component" value="Chromosome 3"/>
</dbReference>
<dbReference type="ExpressionAtlas" id="Q94AH1">
    <property type="expression patterns" value="baseline and differential"/>
</dbReference>
<dbReference type="GO" id="GO:0005886">
    <property type="term" value="C:plasma membrane"/>
    <property type="evidence" value="ECO:0000314"/>
    <property type="project" value="UniProtKB"/>
</dbReference>
<dbReference type="GO" id="GO:1904408">
    <property type="term" value="F:melatonin binding"/>
    <property type="evidence" value="ECO:0000314"/>
    <property type="project" value="UniProtKB"/>
</dbReference>
<dbReference type="GO" id="GO:0008502">
    <property type="term" value="F:melatonin receptor activity"/>
    <property type="evidence" value="ECO:0000315"/>
    <property type="project" value="UniProtKB"/>
</dbReference>
<dbReference type="GO" id="GO:0007186">
    <property type="term" value="P:G protein-coupled receptor signaling pathway"/>
    <property type="evidence" value="ECO:0000314"/>
    <property type="project" value="UniProtKB"/>
</dbReference>
<dbReference type="GO" id="GO:0090333">
    <property type="term" value="P:regulation of stomatal closure"/>
    <property type="evidence" value="ECO:0000315"/>
    <property type="project" value="UniProtKB"/>
</dbReference>
<dbReference type="GO" id="GO:0010555">
    <property type="term" value="P:response to mannitol"/>
    <property type="evidence" value="ECO:0000270"/>
    <property type="project" value="UniProtKB"/>
</dbReference>
<dbReference type="GO" id="GO:0002237">
    <property type="term" value="P:response to molecule of bacterial origin"/>
    <property type="evidence" value="ECO:0000315"/>
    <property type="project" value="UniProtKB"/>
</dbReference>
<dbReference type="GO" id="GO:0006970">
    <property type="term" value="P:response to osmotic stress"/>
    <property type="evidence" value="ECO:0000315"/>
    <property type="project" value="UniProtKB"/>
</dbReference>
<dbReference type="GO" id="GO:0019236">
    <property type="term" value="P:response to pheromone"/>
    <property type="evidence" value="ECO:0000315"/>
    <property type="project" value="UniProtKB"/>
</dbReference>
<dbReference type="GO" id="GO:0010015">
    <property type="term" value="P:root morphogenesis"/>
    <property type="evidence" value="ECO:0000315"/>
    <property type="project" value="TAIR"/>
</dbReference>
<dbReference type="InterPro" id="IPR018781">
    <property type="entry name" value="TPRA1/CAND2/CAND8"/>
</dbReference>
<dbReference type="PANTHER" id="PTHR15876">
    <property type="entry name" value="TRANSMEMBRANE PROTEIN ADIPOCYTE-ASSOCIATED 1"/>
    <property type="match status" value="1"/>
</dbReference>
<dbReference type="PANTHER" id="PTHR15876:SF8">
    <property type="entry name" value="TRANSMEMBRANE PROTEIN ADIPOCYTE-ASSOCIATED 1"/>
    <property type="match status" value="1"/>
</dbReference>
<dbReference type="Pfam" id="PF10160">
    <property type="entry name" value="Tmemb_40"/>
    <property type="match status" value="1"/>
</dbReference>
<feature type="chain" id="PRO_0000447635" description="Protein CANDIDATE G-PROTEIN COUPLED RECEPTOR 2">
    <location>
        <begin position="1"/>
        <end position="300"/>
    </location>
</feature>
<feature type="transmembrane region" description="Helical; Name=1" evidence="1">
    <location>
        <begin position="37"/>
        <end position="57"/>
    </location>
</feature>
<feature type="transmembrane region" description="Helical; Name=2" evidence="1">
    <location>
        <begin position="73"/>
        <end position="93"/>
    </location>
</feature>
<feature type="transmembrane region" description="Helical; Name=3" evidence="1">
    <location>
        <begin position="110"/>
        <end position="130"/>
    </location>
</feature>
<feature type="transmembrane region" description="Helical; Name=4" evidence="1">
    <location>
        <begin position="152"/>
        <end position="172"/>
    </location>
</feature>
<feature type="transmembrane region" description="Helical; Name=5" evidence="1">
    <location>
        <begin position="183"/>
        <end position="203"/>
    </location>
</feature>
<feature type="transmembrane region" description="Helical; Name=6" evidence="1">
    <location>
        <begin position="222"/>
        <end position="242"/>
    </location>
</feature>
<feature type="transmembrane region" description="Helical; Name=7" evidence="1">
    <location>
        <begin position="245"/>
        <end position="265"/>
    </location>
</feature>
<evidence type="ECO:0000255" key="1"/>
<evidence type="ECO:0000269" key="2">
    <source>
    </source>
</evidence>
<evidence type="ECO:0000269" key="3">
    <source>
    </source>
</evidence>
<evidence type="ECO:0000269" key="4">
    <source>
    </source>
</evidence>
<evidence type="ECO:0000269" key="5">
    <source>
    </source>
</evidence>
<evidence type="ECO:0000303" key="6">
    <source>
    </source>
</evidence>
<evidence type="ECO:0000303" key="7">
    <source>
    </source>
</evidence>
<evidence type="ECO:0000305" key="8"/>
<evidence type="ECO:0000312" key="9">
    <source>
        <dbReference type="Araport" id="AT3G05010"/>
    </source>
</evidence>
<evidence type="ECO:0000312" key="10">
    <source>
        <dbReference type="EMBL" id="AAG51409.1"/>
    </source>
</evidence>
<gene>
    <name evidence="6" type="primary">CAND2</name>
    <name evidence="7" type="synonym">PMTR1</name>
    <name evidence="9" type="ordered locus">At3g05010</name>
    <name evidence="10" type="ORF">T9J14.4</name>
</gene>
<name>CAND2_ARATH</name>
<protein>
    <recommendedName>
        <fullName evidence="6">Protein CANDIDATE G-PROTEIN COUPLED RECEPTOR 2</fullName>
        <shortName evidence="6">AtCand2</shortName>
    </recommendedName>
    <alternativeName>
        <fullName evidence="7">Protein PHYTOMELATONIN RECEPTOR 1</fullName>
    </alternativeName>
</protein>